<feature type="signal peptide" evidence="1">
    <location>
        <begin position="1"/>
        <end position="26"/>
    </location>
</feature>
<feature type="chain" id="PRO_0000014985" description="Transmembrane protein 25">
    <location>
        <begin position="27"/>
        <end position="365"/>
    </location>
</feature>
<feature type="topological domain" description="Extracellular" evidence="1">
    <location>
        <begin position="27"/>
        <end position="232"/>
    </location>
</feature>
<feature type="transmembrane region" description="Helical" evidence="1">
    <location>
        <begin position="233"/>
        <end position="253"/>
    </location>
</feature>
<feature type="topological domain" description="Cytoplasmic" evidence="1">
    <location>
        <begin position="254"/>
        <end position="365"/>
    </location>
</feature>
<feature type="domain" description="Ig-like">
    <location>
        <begin position="30"/>
        <end position="123"/>
    </location>
</feature>
<feature type="glycosylation site" description="N-linked (GlcNAc...) asparagine" evidence="1">
    <location>
        <position position="106"/>
    </location>
</feature>
<feature type="glycosylation site" description="N-linked (GlcNAc...) asparagine" evidence="1">
    <location>
        <position position="162"/>
    </location>
</feature>
<feature type="glycosylation site" description="N-linked (GlcNAc...) asparagine" evidence="1">
    <location>
        <position position="192"/>
    </location>
</feature>
<feature type="glycosylation site" description="N-linked (GlcNAc...) asparagine" evidence="1">
    <location>
        <position position="205"/>
    </location>
</feature>
<feature type="disulfide bond" evidence="2">
    <location>
        <begin position="52"/>
        <end position="107"/>
    </location>
</feature>
<feature type="splice variant" id="VSP_012942" description="In isoform 2." evidence="4">
    <location>
        <begin position="280"/>
        <end position="365"/>
    </location>
</feature>
<feature type="sequence conflict" description="In Ref. 2." evidence="5" ref="2">
    <original>S</original>
    <variation>R</variation>
    <location>
        <position position="279"/>
    </location>
</feature>
<keyword id="KW-0025">Alternative splicing</keyword>
<keyword id="KW-1003">Cell membrane</keyword>
<keyword id="KW-1015">Disulfide bond</keyword>
<keyword id="KW-0967">Endosome</keyword>
<keyword id="KW-0325">Glycoprotein</keyword>
<keyword id="KW-0393">Immunoglobulin domain</keyword>
<keyword id="KW-0458">Lysosome</keyword>
<keyword id="KW-0472">Membrane</keyword>
<keyword id="KW-1185">Reference proteome</keyword>
<keyword id="KW-0964">Secreted</keyword>
<keyword id="KW-0732">Signal</keyword>
<keyword id="KW-0812">Transmembrane</keyword>
<keyword id="KW-1133">Transmembrane helix</keyword>
<comment type="function">
    <text evidence="3">In neurons, modulates the degradation of NMDA receptor GRIN2B subunit. Plays a role in the regulation of neuronal excitability.</text>
</comment>
<comment type="subunit">
    <text evidence="3">Interacts with GRIN2B.</text>
</comment>
<comment type="subcellular location">
    <subcellularLocation>
        <location evidence="3">Late endosome</location>
    </subcellularLocation>
    <subcellularLocation>
        <location evidence="3">Lysosome</location>
    </subcellularLocation>
</comment>
<comment type="subcellular location">
    <molecule>Isoform 1</molecule>
    <subcellularLocation>
        <location evidence="5">Cell membrane</location>
        <topology evidence="5">Single-pass type I membrane protein</topology>
    </subcellularLocation>
</comment>
<comment type="subcellular location">
    <molecule>Isoform 2</molecule>
    <subcellularLocation>
        <location evidence="5">Secreted</location>
    </subcellularLocation>
</comment>
<comment type="alternative products">
    <event type="alternative splicing"/>
    <isoform>
        <id>Q9DCF1-1</id>
        <name>1</name>
        <sequence type="displayed"/>
    </isoform>
    <isoform>
        <id>Q9DCF1-2</id>
        <name>2</name>
        <sequence type="described" ref="VSP_012942"/>
    </isoform>
</comment>
<comment type="tissue specificity">
    <text evidence="3">Expressed throughout the brain with higher levels within the hippocampus.</text>
</comment>
<proteinExistence type="evidence at protein level"/>
<evidence type="ECO:0000255" key="1"/>
<evidence type="ECO:0000255" key="2">
    <source>
        <dbReference type="PROSITE-ProRule" id="PRU00114"/>
    </source>
</evidence>
<evidence type="ECO:0000269" key="3">
    <source>
    </source>
</evidence>
<evidence type="ECO:0000303" key="4">
    <source>
    </source>
</evidence>
<evidence type="ECO:0000305" key="5"/>
<evidence type="ECO:0000312" key="6">
    <source>
        <dbReference type="MGI" id="MGI:1918937"/>
    </source>
</evidence>
<organism>
    <name type="scientific">Mus musculus</name>
    <name type="common">Mouse</name>
    <dbReference type="NCBI Taxonomy" id="10090"/>
    <lineage>
        <taxon>Eukaryota</taxon>
        <taxon>Metazoa</taxon>
        <taxon>Chordata</taxon>
        <taxon>Craniata</taxon>
        <taxon>Vertebrata</taxon>
        <taxon>Euteleostomi</taxon>
        <taxon>Mammalia</taxon>
        <taxon>Eutheria</taxon>
        <taxon>Euarchontoglires</taxon>
        <taxon>Glires</taxon>
        <taxon>Rodentia</taxon>
        <taxon>Myomorpha</taxon>
        <taxon>Muroidea</taxon>
        <taxon>Muridae</taxon>
        <taxon>Murinae</taxon>
        <taxon>Mus</taxon>
        <taxon>Mus</taxon>
    </lineage>
</organism>
<dbReference type="EMBL" id="AK002841">
    <property type="protein sequence ID" value="BAB22398.1"/>
    <property type="molecule type" value="mRNA"/>
</dbReference>
<dbReference type="EMBL" id="AK165199">
    <property type="protein sequence ID" value="BAE38074.1"/>
    <property type="molecule type" value="mRNA"/>
</dbReference>
<dbReference type="EMBL" id="AK165827">
    <property type="protein sequence ID" value="BAE38398.1"/>
    <property type="molecule type" value="mRNA"/>
</dbReference>
<dbReference type="EMBL" id="BC060057">
    <property type="protein sequence ID" value="AAH60057.1"/>
    <property type="molecule type" value="mRNA"/>
</dbReference>
<dbReference type="EMBL" id="BC060243">
    <property type="protein sequence ID" value="AAH60243.1"/>
    <property type="molecule type" value="mRNA"/>
</dbReference>
<dbReference type="CCDS" id="CCDS23120.1">
    <molecule id="Q9DCF1-1"/>
</dbReference>
<dbReference type="RefSeq" id="NP_001344313.1">
    <molecule id="Q9DCF1-1"/>
    <property type="nucleotide sequence ID" value="NM_001357384.1"/>
</dbReference>
<dbReference type="RefSeq" id="NP_001344314.1">
    <molecule id="Q9DCF1-1"/>
    <property type="nucleotide sequence ID" value="NM_001357385.1"/>
</dbReference>
<dbReference type="RefSeq" id="NP_082141.1">
    <molecule id="Q9DCF1-1"/>
    <property type="nucleotide sequence ID" value="NM_027865.3"/>
</dbReference>
<dbReference type="RefSeq" id="XP_006510672.1">
    <property type="nucleotide sequence ID" value="XM_006510609.3"/>
</dbReference>
<dbReference type="RefSeq" id="XP_006510673.1">
    <molecule id="Q9DCF1-1"/>
    <property type="nucleotide sequence ID" value="XM_006510610.4"/>
</dbReference>
<dbReference type="FunCoup" id="Q9DCF1">
    <property type="interactions" value="597"/>
</dbReference>
<dbReference type="STRING" id="10090.ENSMUSP00000002100"/>
<dbReference type="GlyConnect" id="2795">
    <property type="glycosylation" value="2 N-Linked glycans (1 site)"/>
</dbReference>
<dbReference type="GlyCosmos" id="Q9DCF1">
    <property type="glycosylation" value="4 sites, 2 glycans"/>
</dbReference>
<dbReference type="GlyGen" id="Q9DCF1">
    <property type="glycosylation" value="6 sites, 7 N-linked glycans (4 sites)"/>
</dbReference>
<dbReference type="iPTMnet" id="Q9DCF1"/>
<dbReference type="PhosphoSitePlus" id="Q9DCF1"/>
<dbReference type="PaxDb" id="10090-ENSMUSP00000002100"/>
<dbReference type="ProteomicsDB" id="259582">
    <molecule id="Q9DCF1-1"/>
</dbReference>
<dbReference type="ProteomicsDB" id="259583">
    <molecule id="Q9DCF1-2"/>
</dbReference>
<dbReference type="Antibodypedia" id="2512">
    <property type="antibodies" value="89 antibodies from 19 providers"/>
</dbReference>
<dbReference type="DNASU" id="71687"/>
<dbReference type="Ensembl" id="ENSMUST00000002100.8">
    <molecule id="Q9DCF1-1"/>
    <property type="protein sequence ID" value="ENSMUSP00000002100.8"/>
    <property type="gene ID" value="ENSMUSG00000002032.18"/>
</dbReference>
<dbReference type="GeneID" id="71687"/>
<dbReference type="KEGG" id="mmu:71687"/>
<dbReference type="UCSC" id="uc009pem.1">
    <molecule id="Q9DCF1-1"/>
    <property type="organism name" value="mouse"/>
</dbReference>
<dbReference type="AGR" id="MGI:1918937"/>
<dbReference type="CTD" id="84866"/>
<dbReference type="MGI" id="MGI:1918937">
    <property type="gene designation" value="Tmem25"/>
</dbReference>
<dbReference type="VEuPathDB" id="HostDB:ENSMUSG00000002032"/>
<dbReference type="eggNOG" id="KOG4555">
    <property type="taxonomic scope" value="Eukaryota"/>
</dbReference>
<dbReference type="GeneTree" id="ENSGT01080000257333"/>
<dbReference type="HOGENOM" id="CLU_048525_0_0_1"/>
<dbReference type="InParanoid" id="Q9DCF1"/>
<dbReference type="OMA" id="CVCLGRW"/>
<dbReference type="OrthoDB" id="8655664at2759"/>
<dbReference type="PhylomeDB" id="Q9DCF1"/>
<dbReference type="TreeFam" id="TF333068"/>
<dbReference type="BioGRID-ORCS" id="71687">
    <property type="hits" value="0 hits in 77 CRISPR screens"/>
</dbReference>
<dbReference type="PRO" id="PR:Q9DCF1"/>
<dbReference type="Proteomes" id="UP000000589">
    <property type="component" value="Chromosome 9"/>
</dbReference>
<dbReference type="RNAct" id="Q9DCF1">
    <property type="molecule type" value="protein"/>
</dbReference>
<dbReference type="Bgee" id="ENSMUSG00000002032">
    <property type="expression patterns" value="Expressed in metanephric proximal tubule and 160 other cell types or tissues"/>
</dbReference>
<dbReference type="ExpressionAtlas" id="Q9DCF1">
    <property type="expression patterns" value="baseline and differential"/>
</dbReference>
<dbReference type="GO" id="GO:0005576">
    <property type="term" value="C:extracellular region"/>
    <property type="evidence" value="ECO:0007669"/>
    <property type="project" value="UniProtKB-SubCell"/>
</dbReference>
<dbReference type="GO" id="GO:0005770">
    <property type="term" value="C:late endosome"/>
    <property type="evidence" value="ECO:0000314"/>
    <property type="project" value="UniProtKB"/>
</dbReference>
<dbReference type="GO" id="GO:0005764">
    <property type="term" value="C:lysosome"/>
    <property type="evidence" value="ECO:0000314"/>
    <property type="project" value="UniProtKB"/>
</dbReference>
<dbReference type="GO" id="GO:0005886">
    <property type="term" value="C:plasma membrane"/>
    <property type="evidence" value="ECO:0007669"/>
    <property type="project" value="UniProtKB-SubCell"/>
</dbReference>
<dbReference type="GO" id="GO:0090394">
    <property type="term" value="P:negative regulation of excitatory postsynaptic potential"/>
    <property type="evidence" value="ECO:0000315"/>
    <property type="project" value="UniProtKB"/>
</dbReference>
<dbReference type="GO" id="GO:0031647">
    <property type="term" value="P:regulation of protein stability"/>
    <property type="evidence" value="ECO:0000314"/>
    <property type="project" value="UniProtKB"/>
</dbReference>
<dbReference type="Gene3D" id="2.60.40.10">
    <property type="entry name" value="Immunoglobulins"/>
    <property type="match status" value="1"/>
</dbReference>
<dbReference type="InterPro" id="IPR013162">
    <property type="entry name" value="CD80_C2-set"/>
</dbReference>
<dbReference type="InterPro" id="IPR007110">
    <property type="entry name" value="Ig-like_dom"/>
</dbReference>
<dbReference type="InterPro" id="IPR036179">
    <property type="entry name" value="Ig-like_dom_sf"/>
</dbReference>
<dbReference type="InterPro" id="IPR013783">
    <property type="entry name" value="Ig-like_fold"/>
</dbReference>
<dbReference type="InterPro" id="IPR042864">
    <property type="entry name" value="TMEM25"/>
</dbReference>
<dbReference type="PANTHER" id="PTHR47224">
    <property type="entry name" value="TRANSMEMBRANE PROTEIN 25"/>
    <property type="match status" value="1"/>
</dbReference>
<dbReference type="PANTHER" id="PTHR47224:SF1">
    <property type="entry name" value="TRANSMEMBRANE PROTEIN 25"/>
    <property type="match status" value="1"/>
</dbReference>
<dbReference type="Pfam" id="PF08205">
    <property type="entry name" value="C2-set_2"/>
    <property type="match status" value="1"/>
</dbReference>
<dbReference type="SUPFAM" id="SSF48726">
    <property type="entry name" value="Immunoglobulin"/>
    <property type="match status" value="1"/>
</dbReference>
<dbReference type="PROSITE" id="PS50835">
    <property type="entry name" value="IG_LIKE"/>
    <property type="match status" value="1"/>
</dbReference>
<sequence length="365" mass="39170">MELPLSQATLRHTLLLLPALLSSGQGELAPQIDGQTWAERALRENEHHAFTCRVAGGSATPRLAWYLDGQLQEATTSRLLSVGGDAFSGGTSTFTVTAQRSQHELNCSLQDPGSGRPANASVILNVQFKPEIAQVGAKYQEAQGPGLLVVLFALVRANPPANVTWIDQDGPVTVNASDFLVLDAQNYPWLTNHTVQLQLRSLAHNLSVVATNDVGVTSASLPAPGLLATRIEVPLLGIVVAGGLALGTLVGFSTLVACLVCRKEKKTKGPSRRPSLISSDSNNLKLNNVRLPRENMSLPSNLQLNDLTPDLRGKATERPMAQHSSRPELLEAEPGGLLTSRGFIRLPMLGYIYRVSSVSSDEIWL</sequence>
<gene>
    <name evidence="6" type="primary">Tmem25</name>
</gene>
<reference key="1">
    <citation type="journal article" date="2005" name="Science">
        <title>The transcriptional landscape of the mammalian genome.</title>
        <authorList>
            <person name="Carninci P."/>
            <person name="Kasukawa T."/>
            <person name="Katayama S."/>
            <person name="Gough J."/>
            <person name="Frith M.C."/>
            <person name="Maeda N."/>
            <person name="Oyama R."/>
            <person name="Ravasi T."/>
            <person name="Lenhard B."/>
            <person name="Wells C."/>
            <person name="Kodzius R."/>
            <person name="Shimokawa K."/>
            <person name="Bajic V.B."/>
            <person name="Brenner S.E."/>
            <person name="Batalov S."/>
            <person name="Forrest A.R."/>
            <person name="Zavolan M."/>
            <person name="Davis M.J."/>
            <person name="Wilming L.G."/>
            <person name="Aidinis V."/>
            <person name="Allen J.E."/>
            <person name="Ambesi-Impiombato A."/>
            <person name="Apweiler R."/>
            <person name="Aturaliya R.N."/>
            <person name="Bailey T.L."/>
            <person name="Bansal M."/>
            <person name="Baxter L."/>
            <person name="Beisel K.W."/>
            <person name="Bersano T."/>
            <person name="Bono H."/>
            <person name="Chalk A.M."/>
            <person name="Chiu K.P."/>
            <person name="Choudhary V."/>
            <person name="Christoffels A."/>
            <person name="Clutterbuck D.R."/>
            <person name="Crowe M.L."/>
            <person name="Dalla E."/>
            <person name="Dalrymple B.P."/>
            <person name="de Bono B."/>
            <person name="Della Gatta G."/>
            <person name="di Bernardo D."/>
            <person name="Down T."/>
            <person name="Engstrom P."/>
            <person name="Fagiolini M."/>
            <person name="Faulkner G."/>
            <person name="Fletcher C.F."/>
            <person name="Fukushima T."/>
            <person name="Furuno M."/>
            <person name="Futaki S."/>
            <person name="Gariboldi M."/>
            <person name="Georgii-Hemming P."/>
            <person name="Gingeras T.R."/>
            <person name="Gojobori T."/>
            <person name="Green R.E."/>
            <person name="Gustincich S."/>
            <person name="Harbers M."/>
            <person name="Hayashi Y."/>
            <person name="Hensch T.K."/>
            <person name="Hirokawa N."/>
            <person name="Hill D."/>
            <person name="Huminiecki L."/>
            <person name="Iacono M."/>
            <person name="Ikeo K."/>
            <person name="Iwama A."/>
            <person name="Ishikawa T."/>
            <person name="Jakt M."/>
            <person name="Kanapin A."/>
            <person name="Katoh M."/>
            <person name="Kawasawa Y."/>
            <person name="Kelso J."/>
            <person name="Kitamura H."/>
            <person name="Kitano H."/>
            <person name="Kollias G."/>
            <person name="Krishnan S.P."/>
            <person name="Kruger A."/>
            <person name="Kummerfeld S.K."/>
            <person name="Kurochkin I.V."/>
            <person name="Lareau L.F."/>
            <person name="Lazarevic D."/>
            <person name="Lipovich L."/>
            <person name="Liu J."/>
            <person name="Liuni S."/>
            <person name="McWilliam S."/>
            <person name="Madan Babu M."/>
            <person name="Madera M."/>
            <person name="Marchionni L."/>
            <person name="Matsuda H."/>
            <person name="Matsuzawa S."/>
            <person name="Miki H."/>
            <person name="Mignone F."/>
            <person name="Miyake S."/>
            <person name="Morris K."/>
            <person name="Mottagui-Tabar S."/>
            <person name="Mulder N."/>
            <person name="Nakano N."/>
            <person name="Nakauchi H."/>
            <person name="Ng P."/>
            <person name="Nilsson R."/>
            <person name="Nishiguchi S."/>
            <person name="Nishikawa S."/>
            <person name="Nori F."/>
            <person name="Ohara O."/>
            <person name="Okazaki Y."/>
            <person name="Orlando V."/>
            <person name="Pang K.C."/>
            <person name="Pavan W.J."/>
            <person name="Pavesi G."/>
            <person name="Pesole G."/>
            <person name="Petrovsky N."/>
            <person name="Piazza S."/>
            <person name="Reed J."/>
            <person name="Reid J.F."/>
            <person name="Ring B.Z."/>
            <person name="Ringwald M."/>
            <person name="Rost B."/>
            <person name="Ruan Y."/>
            <person name="Salzberg S.L."/>
            <person name="Sandelin A."/>
            <person name="Schneider C."/>
            <person name="Schoenbach C."/>
            <person name="Sekiguchi K."/>
            <person name="Semple C.A."/>
            <person name="Seno S."/>
            <person name="Sessa L."/>
            <person name="Sheng Y."/>
            <person name="Shibata Y."/>
            <person name="Shimada H."/>
            <person name="Shimada K."/>
            <person name="Silva D."/>
            <person name="Sinclair B."/>
            <person name="Sperling S."/>
            <person name="Stupka E."/>
            <person name="Sugiura K."/>
            <person name="Sultana R."/>
            <person name="Takenaka Y."/>
            <person name="Taki K."/>
            <person name="Tammoja K."/>
            <person name="Tan S.L."/>
            <person name="Tang S."/>
            <person name="Taylor M.S."/>
            <person name="Tegner J."/>
            <person name="Teichmann S.A."/>
            <person name="Ueda H.R."/>
            <person name="van Nimwegen E."/>
            <person name="Verardo R."/>
            <person name="Wei C.L."/>
            <person name="Yagi K."/>
            <person name="Yamanishi H."/>
            <person name="Zabarovsky E."/>
            <person name="Zhu S."/>
            <person name="Zimmer A."/>
            <person name="Hide W."/>
            <person name="Bult C."/>
            <person name="Grimmond S.M."/>
            <person name="Teasdale R.D."/>
            <person name="Liu E.T."/>
            <person name="Brusic V."/>
            <person name="Quackenbush J."/>
            <person name="Wahlestedt C."/>
            <person name="Mattick J.S."/>
            <person name="Hume D.A."/>
            <person name="Kai C."/>
            <person name="Sasaki D."/>
            <person name="Tomaru Y."/>
            <person name="Fukuda S."/>
            <person name="Kanamori-Katayama M."/>
            <person name="Suzuki M."/>
            <person name="Aoki J."/>
            <person name="Arakawa T."/>
            <person name="Iida J."/>
            <person name="Imamura K."/>
            <person name="Itoh M."/>
            <person name="Kato T."/>
            <person name="Kawaji H."/>
            <person name="Kawagashira N."/>
            <person name="Kawashima T."/>
            <person name="Kojima M."/>
            <person name="Kondo S."/>
            <person name="Konno H."/>
            <person name="Nakano K."/>
            <person name="Ninomiya N."/>
            <person name="Nishio T."/>
            <person name="Okada M."/>
            <person name="Plessy C."/>
            <person name="Shibata K."/>
            <person name="Shiraki T."/>
            <person name="Suzuki S."/>
            <person name="Tagami M."/>
            <person name="Waki K."/>
            <person name="Watahiki A."/>
            <person name="Okamura-Oho Y."/>
            <person name="Suzuki H."/>
            <person name="Kawai J."/>
            <person name="Hayashizaki Y."/>
        </authorList>
    </citation>
    <scope>NUCLEOTIDE SEQUENCE [LARGE SCALE MRNA] (ISOFORM 1)</scope>
    <source>
        <strain>C57BL/6J</strain>
        <tissue>Kidney</tissue>
        <tissue>Medulla oblongata</tissue>
    </source>
</reference>
<reference key="2">
    <citation type="journal article" date="2004" name="Genome Res.">
        <title>The status, quality, and expansion of the NIH full-length cDNA project: the Mammalian Gene Collection (MGC).</title>
        <authorList>
            <consortium name="The MGC Project Team"/>
        </authorList>
    </citation>
    <scope>NUCLEOTIDE SEQUENCE [LARGE SCALE MRNA] (ISOFORM 2)</scope>
    <source>
        <strain>C57BL/6J</strain>
        <tissue>Brain</tissue>
    </source>
</reference>
<reference key="3">
    <citation type="journal article" date="2010" name="Cell">
        <title>A tissue-specific atlas of mouse protein phosphorylation and expression.</title>
        <authorList>
            <person name="Huttlin E.L."/>
            <person name="Jedrychowski M.P."/>
            <person name="Elias J.E."/>
            <person name="Goswami T."/>
            <person name="Rad R."/>
            <person name="Beausoleil S.A."/>
            <person name="Villen J."/>
            <person name="Haas W."/>
            <person name="Sowa M.E."/>
            <person name="Gygi S.P."/>
        </authorList>
    </citation>
    <scope>IDENTIFICATION BY MASS SPECTROMETRY [LARGE SCALE ANALYSIS]</scope>
    <source>
        <tissue>Brain</tissue>
    </source>
</reference>
<reference key="4">
    <citation type="journal article" date="2019" name="J. Clin. Invest.">
        <title>TMEM25 modulates neuronal excitability and NMDA receptor subunit NR2B degradation.</title>
        <authorList>
            <person name="Zhang H."/>
            <person name="Tian X."/>
            <person name="Lu X."/>
            <person name="Xu D."/>
            <person name="Guo Y."/>
            <person name="Dong Z."/>
            <person name="Li Y."/>
            <person name="Ma Y."/>
            <person name="Chen C."/>
            <person name="Yang Y."/>
            <person name="Yang M."/>
            <person name="Yang Y."/>
            <person name="Liu F."/>
            <person name="Zhou R."/>
            <person name="He M."/>
            <person name="Xiao F."/>
            <person name="Wang X."/>
        </authorList>
    </citation>
    <scope>FUNCTION</scope>
    <scope>TISSUE SPECIFICITY</scope>
    <scope>SUBCELLULAR LOCATION</scope>
    <scope>INTERACTION WITH GRIN2B</scope>
</reference>
<protein>
    <recommendedName>
        <fullName evidence="5">Transmembrane protein 25</fullName>
    </recommendedName>
</protein>
<name>TMM25_MOUSE</name>
<accession>Q9DCF1</accession>
<accession>Q3TMP3</accession>
<accession>Q6PAK7</accession>